<reference key="1">
    <citation type="journal article" date="2004" name="Proc. Natl. Acad. Sci. U.S.A.">
        <title>Complete genomes of two clinical Staphylococcus aureus strains: evidence for the rapid evolution of virulence and drug resistance.</title>
        <authorList>
            <person name="Holden M.T.G."/>
            <person name="Feil E.J."/>
            <person name="Lindsay J.A."/>
            <person name="Peacock S.J."/>
            <person name="Day N.P.J."/>
            <person name="Enright M.C."/>
            <person name="Foster T.J."/>
            <person name="Moore C.E."/>
            <person name="Hurst L."/>
            <person name="Atkin R."/>
            <person name="Barron A."/>
            <person name="Bason N."/>
            <person name="Bentley S.D."/>
            <person name="Chillingworth C."/>
            <person name="Chillingworth T."/>
            <person name="Churcher C."/>
            <person name="Clark L."/>
            <person name="Corton C."/>
            <person name="Cronin A."/>
            <person name="Doggett J."/>
            <person name="Dowd L."/>
            <person name="Feltwell T."/>
            <person name="Hance Z."/>
            <person name="Harris B."/>
            <person name="Hauser H."/>
            <person name="Holroyd S."/>
            <person name="Jagels K."/>
            <person name="James K.D."/>
            <person name="Lennard N."/>
            <person name="Line A."/>
            <person name="Mayes R."/>
            <person name="Moule S."/>
            <person name="Mungall K."/>
            <person name="Ormond D."/>
            <person name="Quail M.A."/>
            <person name="Rabbinowitsch E."/>
            <person name="Rutherford K.M."/>
            <person name="Sanders M."/>
            <person name="Sharp S."/>
            <person name="Simmonds M."/>
            <person name="Stevens K."/>
            <person name="Whitehead S."/>
            <person name="Barrell B.G."/>
            <person name="Spratt B.G."/>
            <person name="Parkhill J."/>
        </authorList>
    </citation>
    <scope>NUCLEOTIDE SEQUENCE [LARGE SCALE GENOMIC DNA]</scope>
    <source>
        <strain>MSSA476</strain>
    </source>
</reference>
<reference key="2">
    <citation type="journal article" date="2006" name="Structure">
        <title>Prokaryotic type II and type III pantothenate kinases: the same monomer fold creates dimers with distinct catalytic properties.</title>
        <authorList>
            <person name="Hong B.S."/>
            <person name="Yun M.K."/>
            <person name="Zhang Y.-M."/>
            <person name="Chohnan S."/>
            <person name="Rock C.O."/>
            <person name="White S.W."/>
            <person name="Jackowski S."/>
            <person name="Park H.-W."/>
            <person name="Leonardi R."/>
        </authorList>
    </citation>
    <scope>X-RAY CRYSTALLOGRAPHY (2.05 ANGSTROMS) IN COMPLEX WITH ATP ANALOG</scope>
    <scope>FUNCTION</scope>
    <scope>SUBUNIT</scope>
    <scope>MUTAGENESIS OF ASP-6; THR-10; LEU-11; LYS-13; GLU-70; TYR-137 AND LEU-263</scope>
</reference>
<feature type="chain" id="PRO_0000261346" description="Type II pantothenate kinase">
    <location>
        <begin position="1"/>
        <end position="267"/>
    </location>
</feature>
<feature type="active site" description="Proton acceptor">
    <location>
        <position position="70"/>
    </location>
</feature>
<feature type="binding site">
    <location>
        <begin position="6"/>
        <end position="13"/>
    </location>
    <ligand>
        <name>ATP</name>
        <dbReference type="ChEBI" id="CHEBI:30616"/>
    </ligand>
</feature>
<feature type="binding site">
    <location>
        <position position="99"/>
    </location>
    <ligand>
        <name>ATP</name>
        <dbReference type="ChEBI" id="CHEBI:30616"/>
    </ligand>
</feature>
<feature type="binding site">
    <location>
        <begin position="121"/>
        <end position="125"/>
    </location>
    <ligand>
        <name>ATP</name>
        <dbReference type="ChEBI" id="CHEBI:30616"/>
    </ligand>
</feature>
<feature type="binding site">
    <location>
        <position position="137"/>
    </location>
    <ligand>
        <name>ATP</name>
        <dbReference type="ChEBI" id="CHEBI:30616"/>
    </ligand>
</feature>
<feature type="binding site">
    <location>
        <position position="225"/>
    </location>
    <ligand>
        <name>ATP</name>
        <dbReference type="ChEBI" id="CHEBI:30616"/>
    </ligand>
</feature>
<feature type="mutagenesis site" description="Abolishes enzymatic activity. Fails to bind ATP." evidence="1">
    <original>D</original>
    <variation>A</variation>
    <location>
        <position position="6"/>
    </location>
</feature>
<feature type="mutagenesis site" description="Very low enzymatic activity. Still binds ATP." evidence="1">
    <original>T</original>
    <variation>A</variation>
    <location>
        <position position="10"/>
    </location>
</feature>
<feature type="mutagenesis site" description="Less active protein." evidence="1">
    <original>L</original>
    <variation>A</variation>
    <location>
        <position position="11"/>
    </location>
</feature>
<feature type="mutagenesis site" description="Abolishes enzymatic activity. Fails to bind ATP." evidence="1">
    <original>K</original>
    <variation>A</variation>
    <location>
        <position position="13"/>
    </location>
</feature>
<feature type="mutagenesis site" description="Abolishes enzymatic activity." evidence="1">
    <original>E</original>
    <variation>A</variation>
    <location>
        <position position="70"/>
    </location>
</feature>
<feature type="mutagenesis site" description="Very low enzymatic activity." evidence="1">
    <original>Y</original>
    <variation>A</variation>
    <location>
        <position position="137"/>
    </location>
</feature>
<feature type="mutagenesis site" description="Very low enzymatic activity." evidence="1">
    <original>L</original>
    <variation>P</variation>
    <location>
        <position position="263"/>
    </location>
</feature>
<feature type="strand" evidence="3">
    <location>
        <begin position="2"/>
        <end position="7"/>
    </location>
</feature>
<feature type="strand" evidence="3">
    <location>
        <begin position="9"/>
        <end position="17"/>
    </location>
</feature>
<feature type="strand" evidence="3">
    <location>
        <begin position="22"/>
        <end position="28"/>
    </location>
</feature>
<feature type="helix" evidence="3">
    <location>
        <begin position="29"/>
        <end position="31"/>
    </location>
</feature>
<feature type="helix" evidence="3">
    <location>
        <begin position="32"/>
        <end position="40"/>
    </location>
</feature>
<feature type="strand" evidence="3">
    <location>
        <begin position="45"/>
        <end position="51"/>
    </location>
</feature>
<feature type="helix" evidence="3">
    <location>
        <begin position="54"/>
        <end position="58"/>
    </location>
</feature>
<feature type="strand" evidence="3">
    <location>
        <begin position="61"/>
        <end position="63"/>
    </location>
</feature>
<feature type="strand" evidence="4">
    <location>
        <begin position="66"/>
        <end position="68"/>
    </location>
</feature>
<feature type="helix" evidence="3">
    <location>
        <begin position="70"/>
        <end position="84"/>
    </location>
</feature>
<feature type="strand" evidence="3">
    <location>
        <begin position="92"/>
        <end position="106"/>
    </location>
</feature>
<feature type="strand" evidence="3">
    <location>
        <begin position="111"/>
        <end position="118"/>
    </location>
</feature>
<feature type="helix" evidence="3">
    <location>
        <begin position="121"/>
        <end position="132"/>
    </location>
</feature>
<feature type="helix" evidence="3">
    <location>
        <begin position="137"/>
        <end position="144"/>
    </location>
</feature>
<feature type="turn" evidence="3">
    <location>
        <begin position="150"/>
        <end position="152"/>
    </location>
</feature>
<feature type="turn" evidence="3">
    <location>
        <begin position="156"/>
        <end position="158"/>
    </location>
</feature>
<feature type="strand" evidence="3">
    <location>
        <begin position="171"/>
        <end position="174"/>
    </location>
</feature>
<feature type="turn" evidence="3">
    <location>
        <begin position="175"/>
        <end position="178"/>
    </location>
</feature>
<feature type="helix" evidence="3">
    <location>
        <begin position="179"/>
        <end position="181"/>
    </location>
</feature>
<feature type="helix" evidence="3">
    <location>
        <begin position="189"/>
        <end position="214"/>
    </location>
</feature>
<feature type="strand" evidence="3">
    <location>
        <begin position="219"/>
        <end position="224"/>
    </location>
</feature>
<feature type="helix" evidence="3">
    <location>
        <begin position="225"/>
        <end position="227"/>
    </location>
</feature>
<feature type="helix" evidence="3">
    <location>
        <begin position="231"/>
        <end position="243"/>
    </location>
</feature>
<feature type="strand" evidence="3">
    <location>
        <begin position="247"/>
        <end position="250"/>
    </location>
</feature>
<feature type="helix" evidence="3">
    <location>
        <begin position="254"/>
        <end position="256"/>
    </location>
</feature>
<feature type="helix" evidence="3">
    <location>
        <begin position="257"/>
        <end position="264"/>
    </location>
</feature>
<comment type="function">
    <text evidence="1">Catalyzes the phosphorylation of pantothenate (Pan), the first step in CoA biosynthesis.</text>
</comment>
<comment type="catalytic activity">
    <reaction>
        <text>(R)-pantothenate + ATP = (R)-4'-phosphopantothenate + ADP + H(+)</text>
        <dbReference type="Rhea" id="RHEA:16373"/>
        <dbReference type="ChEBI" id="CHEBI:10986"/>
        <dbReference type="ChEBI" id="CHEBI:15378"/>
        <dbReference type="ChEBI" id="CHEBI:29032"/>
        <dbReference type="ChEBI" id="CHEBI:30616"/>
        <dbReference type="ChEBI" id="CHEBI:456216"/>
        <dbReference type="EC" id="2.7.1.33"/>
    </reaction>
</comment>
<comment type="pathway">
    <text>Cofactor biosynthesis; coenzyme A biosynthesis; CoA from (R)-pantothenate: step 1/5.</text>
</comment>
<comment type="subunit">
    <text evidence="1">Homodimer.</text>
</comment>
<comment type="subcellular location">
    <subcellularLocation>
        <location evidence="2">Cytoplasm</location>
    </subcellularLocation>
</comment>
<comment type="similarity">
    <text evidence="2">Belongs to the type II pantothenate kinase family.</text>
</comment>
<proteinExistence type="evidence at protein level"/>
<protein>
    <recommendedName>
        <fullName>Type II pantothenate kinase</fullName>
        <ecNumber>2.7.1.33</ecNumber>
    </recommendedName>
    <alternativeName>
        <fullName>PanK-II</fullName>
    </alternativeName>
    <alternativeName>
        <fullName>Pantothenic acid kinase</fullName>
    </alternativeName>
</protein>
<name>COAW_STAAS</name>
<dbReference type="EC" id="2.7.1.33"/>
<dbReference type="EMBL" id="BX571857">
    <property type="protein sequence ID" value="CAG43841.1"/>
    <property type="molecule type" value="Genomic_DNA"/>
</dbReference>
<dbReference type="RefSeq" id="WP_000862727.1">
    <property type="nucleotide sequence ID" value="NC_002953.3"/>
</dbReference>
<dbReference type="PDB" id="2EWS">
    <property type="method" value="X-ray"/>
    <property type="resolution" value="2.05 A"/>
    <property type="chains" value="A/B=1-267"/>
</dbReference>
<dbReference type="PDB" id="4NB4">
    <property type="method" value="X-ray"/>
    <property type="resolution" value="2.25 A"/>
    <property type="chains" value="A/B/C/D/E/F/G/H=1-267"/>
</dbReference>
<dbReference type="PDBsum" id="2EWS"/>
<dbReference type="PDBsum" id="4NB4"/>
<dbReference type="SMR" id="Q6G7I0"/>
<dbReference type="ChEMBL" id="CHEMBL4295609"/>
<dbReference type="KEGG" id="sas:SAS2033"/>
<dbReference type="HOGENOM" id="CLU_087521_1_0_9"/>
<dbReference type="BRENDA" id="2.7.1.33">
    <property type="organism ID" value="3352"/>
</dbReference>
<dbReference type="UniPathway" id="UPA00241">
    <property type="reaction ID" value="UER00352"/>
</dbReference>
<dbReference type="EvolutionaryTrace" id="Q6G7I0"/>
<dbReference type="GO" id="GO:0005829">
    <property type="term" value="C:cytosol"/>
    <property type="evidence" value="ECO:0007669"/>
    <property type="project" value="TreeGrafter"/>
</dbReference>
<dbReference type="GO" id="GO:0005524">
    <property type="term" value="F:ATP binding"/>
    <property type="evidence" value="ECO:0007669"/>
    <property type="project" value="UniProtKB-UniRule"/>
</dbReference>
<dbReference type="GO" id="GO:0004594">
    <property type="term" value="F:pantothenate kinase activity"/>
    <property type="evidence" value="ECO:0007669"/>
    <property type="project" value="UniProtKB-UniRule"/>
</dbReference>
<dbReference type="GO" id="GO:0015937">
    <property type="term" value="P:coenzyme A biosynthetic process"/>
    <property type="evidence" value="ECO:0007669"/>
    <property type="project" value="UniProtKB-UniRule"/>
</dbReference>
<dbReference type="CDD" id="cd24016">
    <property type="entry name" value="ASKHA_NBD_PanK-II"/>
    <property type="match status" value="1"/>
</dbReference>
<dbReference type="Gene3D" id="3.30.420.40">
    <property type="match status" value="1"/>
</dbReference>
<dbReference type="HAMAP" id="MF_01273">
    <property type="entry name" value="Pantothen_kinase_2"/>
    <property type="match status" value="1"/>
</dbReference>
<dbReference type="InterPro" id="IPR043129">
    <property type="entry name" value="ATPase_NBD"/>
</dbReference>
<dbReference type="InterPro" id="IPR004567">
    <property type="entry name" value="Type_II_PanK"/>
</dbReference>
<dbReference type="InterPro" id="IPR011602">
    <property type="entry name" value="Type_II_PanK_bac"/>
</dbReference>
<dbReference type="NCBIfam" id="TIGR00555">
    <property type="entry name" value="panK_eukar"/>
    <property type="match status" value="1"/>
</dbReference>
<dbReference type="NCBIfam" id="NF009842">
    <property type="entry name" value="PRK13317.1"/>
    <property type="match status" value="1"/>
</dbReference>
<dbReference type="PANTHER" id="PTHR12280:SF20">
    <property type="entry name" value="4'-PHOSPHOPANTETHEINE PHOSPHATASE"/>
    <property type="match status" value="1"/>
</dbReference>
<dbReference type="PANTHER" id="PTHR12280">
    <property type="entry name" value="PANTOTHENATE KINASE"/>
    <property type="match status" value="1"/>
</dbReference>
<dbReference type="Pfam" id="PF03630">
    <property type="entry name" value="Fumble"/>
    <property type="match status" value="1"/>
</dbReference>
<dbReference type="PIRSF" id="PIRSF036940">
    <property type="entry name" value="PanK_bac_aCoA"/>
    <property type="match status" value="1"/>
</dbReference>
<dbReference type="SUPFAM" id="SSF53067">
    <property type="entry name" value="Actin-like ATPase domain"/>
    <property type="match status" value="1"/>
</dbReference>
<sequence>MKVGIDAGGTLIKIVQEQDNQRTFKTELTKNIDQVVEWLNQQQIEKLCLTGGNAGVIAENINIPAQIFVEFDAASQGLGILLKEQGHDLADYIFANVGTGTSLHYFDGQSQRRVGGIGTGGGMIQGLGYLLSQITDYKQLTDMAQHGDRNTIDLKVRHIYKDTEPPIPGDLTAANFGHVLHHLDADFTPSNKLAAVIGVVGEVVTTMAITVAREFKTENIVYIGSSFHNNALLRKVVEDYTVLRGCKPYYVENGAFSGAIGALYLEK</sequence>
<evidence type="ECO:0000269" key="1">
    <source>
    </source>
</evidence>
<evidence type="ECO:0000305" key="2"/>
<evidence type="ECO:0007829" key="3">
    <source>
        <dbReference type="PDB" id="2EWS"/>
    </source>
</evidence>
<evidence type="ECO:0007829" key="4">
    <source>
        <dbReference type="PDB" id="4NB4"/>
    </source>
</evidence>
<gene>
    <name type="primary">coaW</name>
    <name type="synonym">coaA</name>
    <name type="ordered locus">SAS2033</name>
</gene>
<keyword id="KW-0002">3D-structure</keyword>
<keyword id="KW-0067">ATP-binding</keyword>
<keyword id="KW-0173">Coenzyme A biosynthesis</keyword>
<keyword id="KW-0963">Cytoplasm</keyword>
<keyword id="KW-0418">Kinase</keyword>
<keyword id="KW-0547">Nucleotide-binding</keyword>
<keyword id="KW-0808">Transferase</keyword>
<organism>
    <name type="scientific">Staphylococcus aureus (strain MSSA476)</name>
    <dbReference type="NCBI Taxonomy" id="282459"/>
    <lineage>
        <taxon>Bacteria</taxon>
        <taxon>Bacillati</taxon>
        <taxon>Bacillota</taxon>
        <taxon>Bacilli</taxon>
        <taxon>Bacillales</taxon>
        <taxon>Staphylococcaceae</taxon>
        <taxon>Staphylococcus</taxon>
    </lineage>
</organism>
<accession>Q6G7I0</accession>